<gene>
    <name evidence="1" type="primary">rnfC</name>
    <name type="ordered locus">ESA_01988</name>
</gene>
<comment type="function">
    <text evidence="1">Part of a membrane-bound complex that couples electron transfer with translocation of ions across the membrane.</text>
</comment>
<comment type="cofactor">
    <cofactor evidence="1">
        <name>[4Fe-4S] cluster</name>
        <dbReference type="ChEBI" id="CHEBI:49883"/>
    </cofactor>
    <text evidence="1">Binds 2 [4Fe-4S] clusters per subunit.</text>
</comment>
<comment type="subunit">
    <text evidence="1">The complex is composed of six subunits: RnfA, RnfB, RnfC, RnfD, RnfE and RnfG.</text>
</comment>
<comment type="subcellular location">
    <subcellularLocation>
        <location evidence="1">Cell inner membrane</location>
        <topology evidence="1">Peripheral membrane protein</topology>
    </subcellularLocation>
</comment>
<comment type="similarity">
    <text evidence="1">Belongs to the 4Fe4S bacterial-type ferredoxin family. RnfC subfamily.</text>
</comment>
<name>RNFC_CROS8</name>
<protein>
    <recommendedName>
        <fullName evidence="1">Ion-translocating oxidoreductase complex subunit C</fullName>
        <ecNumber evidence="1">7.-.-.-</ecNumber>
    </recommendedName>
    <alternativeName>
        <fullName evidence="1">Rnf electron transport complex subunit C</fullName>
    </alternativeName>
</protein>
<evidence type="ECO:0000255" key="1">
    <source>
        <dbReference type="HAMAP-Rule" id="MF_00461"/>
    </source>
</evidence>
<evidence type="ECO:0000256" key="2">
    <source>
        <dbReference type="SAM" id="MobiDB-lite"/>
    </source>
</evidence>
<dbReference type="EC" id="7.-.-.-" evidence="1"/>
<dbReference type="EMBL" id="CP000783">
    <property type="protein sequence ID" value="ABU77241.1"/>
    <property type="molecule type" value="Genomic_DNA"/>
</dbReference>
<dbReference type="SMR" id="A7MMK9"/>
<dbReference type="KEGG" id="esa:ESA_01988"/>
<dbReference type="PATRIC" id="fig|290339.8.peg.1773"/>
<dbReference type="HOGENOM" id="CLU_010808_2_1_6"/>
<dbReference type="Proteomes" id="UP000000260">
    <property type="component" value="Chromosome"/>
</dbReference>
<dbReference type="GO" id="GO:0005886">
    <property type="term" value="C:plasma membrane"/>
    <property type="evidence" value="ECO:0007669"/>
    <property type="project" value="UniProtKB-SubCell"/>
</dbReference>
<dbReference type="GO" id="GO:0051539">
    <property type="term" value="F:4 iron, 4 sulfur cluster binding"/>
    <property type="evidence" value="ECO:0007669"/>
    <property type="project" value="UniProtKB-KW"/>
</dbReference>
<dbReference type="GO" id="GO:0009055">
    <property type="term" value="F:electron transfer activity"/>
    <property type="evidence" value="ECO:0007669"/>
    <property type="project" value="InterPro"/>
</dbReference>
<dbReference type="GO" id="GO:0046872">
    <property type="term" value="F:metal ion binding"/>
    <property type="evidence" value="ECO:0007669"/>
    <property type="project" value="UniProtKB-KW"/>
</dbReference>
<dbReference type="GO" id="GO:0022900">
    <property type="term" value="P:electron transport chain"/>
    <property type="evidence" value="ECO:0007669"/>
    <property type="project" value="UniProtKB-UniRule"/>
</dbReference>
<dbReference type="Gene3D" id="3.30.70.20">
    <property type="match status" value="1"/>
</dbReference>
<dbReference type="Gene3D" id="3.40.50.11540">
    <property type="entry name" value="NADH-ubiquinone oxidoreductase 51kDa subunit"/>
    <property type="match status" value="1"/>
</dbReference>
<dbReference type="HAMAP" id="MF_00461">
    <property type="entry name" value="RsxC_RnfC"/>
    <property type="match status" value="1"/>
</dbReference>
<dbReference type="InterPro" id="IPR017896">
    <property type="entry name" value="4Fe4S_Fe-S-bd"/>
</dbReference>
<dbReference type="InterPro" id="IPR017900">
    <property type="entry name" value="4Fe4S_Fe_S_CS"/>
</dbReference>
<dbReference type="InterPro" id="IPR010208">
    <property type="entry name" value="Ion_transpt_RnfC/RsxC"/>
</dbReference>
<dbReference type="InterPro" id="IPR011538">
    <property type="entry name" value="Nuo51_FMN-bd"/>
</dbReference>
<dbReference type="InterPro" id="IPR037225">
    <property type="entry name" value="Nuo51_FMN-bd_sf"/>
</dbReference>
<dbReference type="InterPro" id="IPR026902">
    <property type="entry name" value="RnfC_N"/>
</dbReference>
<dbReference type="InterPro" id="IPR019554">
    <property type="entry name" value="Soluble_ligand-bd"/>
</dbReference>
<dbReference type="NCBIfam" id="NF003454">
    <property type="entry name" value="PRK05035.1"/>
    <property type="match status" value="1"/>
</dbReference>
<dbReference type="NCBIfam" id="TIGR01945">
    <property type="entry name" value="rnfC"/>
    <property type="match status" value="1"/>
</dbReference>
<dbReference type="PANTHER" id="PTHR43034">
    <property type="entry name" value="ION-TRANSLOCATING OXIDOREDUCTASE COMPLEX SUBUNIT C"/>
    <property type="match status" value="1"/>
</dbReference>
<dbReference type="PANTHER" id="PTHR43034:SF2">
    <property type="entry name" value="ION-TRANSLOCATING OXIDOREDUCTASE COMPLEX SUBUNIT C"/>
    <property type="match status" value="1"/>
</dbReference>
<dbReference type="Pfam" id="PF01512">
    <property type="entry name" value="Complex1_51K"/>
    <property type="match status" value="1"/>
</dbReference>
<dbReference type="Pfam" id="PF12838">
    <property type="entry name" value="Fer4_7"/>
    <property type="match status" value="1"/>
</dbReference>
<dbReference type="Pfam" id="PF13375">
    <property type="entry name" value="RnfC_N"/>
    <property type="match status" value="1"/>
</dbReference>
<dbReference type="Pfam" id="PF10531">
    <property type="entry name" value="SLBB"/>
    <property type="match status" value="1"/>
</dbReference>
<dbReference type="SUPFAM" id="SSF46548">
    <property type="entry name" value="alpha-helical ferredoxin"/>
    <property type="match status" value="1"/>
</dbReference>
<dbReference type="SUPFAM" id="SSF142019">
    <property type="entry name" value="Nqo1 FMN-binding domain-like"/>
    <property type="match status" value="1"/>
</dbReference>
<dbReference type="PROSITE" id="PS00198">
    <property type="entry name" value="4FE4S_FER_1"/>
    <property type="match status" value="2"/>
</dbReference>
<dbReference type="PROSITE" id="PS51379">
    <property type="entry name" value="4FE4S_FER_2"/>
    <property type="match status" value="2"/>
</dbReference>
<sequence length="776" mass="82852">MLKLFSAFRKEKVWDFNGGIHPPEMKTQSNGTPLRQLPLPGRFIIPLKQHIGSEGEICVAPGDKVLRGQPLTIGRGRMLPVHAPTSGTVTAIMPHPTAHPSALPELSVIIDADGEDRWIARDGWSDYQCRSREALIERIHQFGVAGLGGAGFPTGTKLQGGGDKIETLIINAAECEPYITADDRLMQDCAAQIIDGVRILAHILQPREVLIGIEDNKPQAISMMRAVLHGEHKIRLRVIPTKYPSGGAKQLTQILTGKQVPHGGRSSDIGVLMQNVGTAFAVKRAIIDGEPLTERVVTLTGEAVGRPGNVWARIGTPVRHLLEHAGFIPTSEQLVIMGGPLMGFTLPGLDVPVVKITNCLLAPSATEMGAPQEEQHCIRCSACADACPADLLPQQLYWFSVGQQHDKATAHNLADCIECGACAYVCPSNIPLVQYFRQEKAEIRAIAEEEKRAAEAKARFEARQARLEREKAARLERHKKSAVQPSGQDQDAIQAALARVREKKGDDQPIIVAAGAKPDNSAVIAAREARKAEARARQAEKVQQEMAANSSVPAHEATEPEIDASAESVDPRKAAVEAAIARAKARKAAQAGENATADEKPAEPIDPRKAAVEAAIARAKARKAAQAGENATADEKPAEPIDPRKAAVEAAIARAKARKAAQAGENATADEKPAEPIDPRKAAVEAAIARAKARKAAQAGENATADEKPAEPIDPRKATVEAAIARAKARKAAQAGERAQAANEENEAEDPRKAAVAAAIARVQARKAAEKVVNED</sequence>
<feature type="chain" id="PRO_1000013605" description="Ion-translocating oxidoreductase complex subunit C">
    <location>
        <begin position="1"/>
        <end position="776"/>
    </location>
</feature>
<feature type="domain" description="4Fe-4S ferredoxin-type 1" evidence="1">
    <location>
        <begin position="368"/>
        <end position="397"/>
    </location>
</feature>
<feature type="domain" description="4Fe-4S ferredoxin-type 2" evidence="1">
    <location>
        <begin position="407"/>
        <end position="436"/>
    </location>
</feature>
<feature type="region of interest" description="Disordered" evidence="2">
    <location>
        <begin position="534"/>
        <end position="754"/>
    </location>
</feature>
<feature type="compositionally biased region" description="Basic and acidic residues" evidence="2">
    <location>
        <begin position="534"/>
        <end position="543"/>
    </location>
</feature>
<feature type="compositionally biased region" description="Basic and acidic residues" evidence="2">
    <location>
        <begin position="597"/>
        <end position="611"/>
    </location>
</feature>
<feature type="compositionally biased region" description="Basic and acidic residues" evidence="2">
    <location>
        <begin position="633"/>
        <end position="647"/>
    </location>
</feature>
<feature type="compositionally biased region" description="Basic and acidic residues" evidence="2">
    <location>
        <begin position="669"/>
        <end position="683"/>
    </location>
</feature>
<feature type="compositionally biased region" description="Basic and acidic residues" evidence="2">
    <location>
        <begin position="705"/>
        <end position="719"/>
    </location>
</feature>
<feature type="compositionally biased region" description="Low complexity" evidence="2">
    <location>
        <begin position="721"/>
        <end position="743"/>
    </location>
</feature>
<feature type="binding site" evidence="1">
    <location>
        <position position="377"/>
    </location>
    <ligand>
        <name>[4Fe-4S] cluster</name>
        <dbReference type="ChEBI" id="CHEBI:49883"/>
        <label>1</label>
    </ligand>
</feature>
<feature type="binding site" evidence="1">
    <location>
        <position position="380"/>
    </location>
    <ligand>
        <name>[4Fe-4S] cluster</name>
        <dbReference type="ChEBI" id="CHEBI:49883"/>
        <label>1</label>
    </ligand>
</feature>
<feature type="binding site" evidence="1">
    <location>
        <position position="383"/>
    </location>
    <ligand>
        <name>[4Fe-4S] cluster</name>
        <dbReference type="ChEBI" id="CHEBI:49883"/>
        <label>1</label>
    </ligand>
</feature>
<feature type="binding site" evidence="1">
    <location>
        <position position="387"/>
    </location>
    <ligand>
        <name>[4Fe-4S] cluster</name>
        <dbReference type="ChEBI" id="CHEBI:49883"/>
        <label>2</label>
    </ligand>
</feature>
<feature type="binding site" evidence="1">
    <location>
        <position position="416"/>
    </location>
    <ligand>
        <name>[4Fe-4S] cluster</name>
        <dbReference type="ChEBI" id="CHEBI:49883"/>
        <label>2</label>
    </ligand>
</feature>
<feature type="binding site" evidence="1">
    <location>
        <position position="419"/>
    </location>
    <ligand>
        <name>[4Fe-4S] cluster</name>
        <dbReference type="ChEBI" id="CHEBI:49883"/>
        <label>2</label>
    </ligand>
</feature>
<feature type="binding site" evidence="1">
    <location>
        <position position="422"/>
    </location>
    <ligand>
        <name>[4Fe-4S] cluster</name>
        <dbReference type="ChEBI" id="CHEBI:49883"/>
        <label>2</label>
    </ligand>
</feature>
<feature type="binding site" evidence="1">
    <location>
        <position position="426"/>
    </location>
    <ligand>
        <name>[4Fe-4S] cluster</name>
        <dbReference type="ChEBI" id="CHEBI:49883"/>
        <label>1</label>
    </ligand>
</feature>
<organism>
    <name type="scientific">Cronobacter sakazakii (strain ATCC BAA-894)</name>
    <name type="common">Enterobacter sakazakii</name>
    <dbReference type="NCBI Taxonomy" id="290339"/>
    <lineage>
        <taxon>Bacteria</taxon>
        <taxon>Pseudomonadati</taxon>
        <taxon>Pseudomonadota</taxon>
        <taxon>Gammaproteobacteria</taxon>
        <taxon>Enterobacterales</taxon>
        <taxon>Enterobacteriaceae</taxon>
        <taxon>Cronobacter</taxon>
    </lineage>
</organism>
<proteinExistence type="inferred from homology"/>
<reference key="1">
    <citation type="journal article" date="2010" name="PLoS ONE">
        <title>Genome sequence of Cronobacter sakazakii BAA-894 and comparative genomic hybridization analysis with other Cronobacter species.</title>
        <authorList>
            <person name="Kucerova E."/>
            <person name="Clifton S.W."/>
            <person name="Xia X.Q."/>
            <person name="Long F."/>
            <person name="Porwollik S."/>
            <person name="Fulton L."/>
            <person name="Fronick C."/>
            <person name="Minx P."/>
            <person name="Kyung K."/>
            <person name="Warren W."/>
            <person name="Fulton R."/>
            <person name="Feng D."/>
            <person name="Wollam A."/>
            <person name="Shah N."/>
            <person name="Bhonagiri V."/>
            <person name="Nash W.E."/>
            <person name="Hallsworth-Pepin K."/>
            <person name="Wilson R.K."/>
            <person name="McClelland M."/>
            <person name="Forsythe S.J."/>
        </authorList>
    </citation>
    <scope>NUCLEOTIDE SEQUENCE [LARGE SCALE GENOMIC DNA]</scope>
    <source>
        <strain>ATCC BAA-894</strain>
    </source>
</reference>
<accession>A7MMK9</accession>
<keyword id="KW-0004">4Fe-4S</keyword>
<keyword id="KW-0997">Cell inner membrane</keyword>
<keyword id="KW-1003">Cell membrane</keyword>
<keyword id="KW-0249">Electron transport</keyword>
<keyword id="KW-0408">Iron</keyword>
<keyword id="KW-0411">Iron-sulfur</keyword>
<keyword id="KW-0472">Membrane</keyword>
<keyword id="KW-0479">Metal-binding</keyword>
<keyword id="KW-1185">Reference proteome</keyword>
<keyword id="KW-0677">Repeat</keyword>
<keyword id="KW-1278">Translocase</keyword>
<keyword id="KW-0813">Transport</keyword>